<feature type="chain" id="PRO_1000198892" description="Arginine--tRNA ligase">
    <location>
        <begin position="1"/>
        <end position="585"/>
    </location>
</feature>
<feature type="short sequence motif" description="'HIGH' region">
    <location>
        <begin position="126"/>
        <end position="136"/>
    </location>
</feature>
<evidence type="ECO:0000255" key="1">
    <source>
        <dbReference type="HAMAP-Rule" id="MF_00123"/>
    </source>
</evidence>
<sequence>MSSPLDHLKTQLQRAMVAAYGETLSGADPLLVNASHPKFGDYQSNAPLPLAKQLNQPPRTIASTIVDHLEVGEAWEPPTIAGPGFINFTLKTSYLASQLELRLTDPRLGISAVKLPLRVVVDFSSPNIAKEMHVGHLRSTIIGDCLARILEFLGHEVLRLNHVGDWGTQFGMLITYLREVCPEALTAPDAVDLGDLVAFYRQAKQRFDSDPDFQAIARQEVVRLQSGEPDSLHAWQLLCAQSRREFEKIYNLLDIKLTERGESFYNPLLPQVIQALDQTGLLVEDQGAKCVFLEGYTNKAGDPQPLIVQKSDGGYIYATTDLAALRYRIEQDQADWIIYVTDAGQSTHFAQVFQVAQRAGWIPNRIRLVHVPFGLVQGEDGKKLKTRSGDTVRLQDLLDEAIDRARNDLVSRLEAEGRQETPEFIDHVAQVVGIGAVKYADLSQNRTSNYVFSYDKMLSLQGNTAPYLIYAYVRVQGISRKGQIDLEQLTEQPTLSLQEEEEKLLARHLLQLEDVLAQVTEDLLPNRLCQYLFELSQKFNQFYDRCPILQAEEPLRNSRLGLAQLTARTLKLGLSLLGIQVLERM</sequence>
<accession>B8HSK8</accession>
<gene>
    <name evidence="1" type="primary">argS</name>
    <name type="ordered locus">Cyan7425_3671</name>
</gene>
<keyword id="KW-0030">Aminoacyl-tRNA synthetase</keyword>
<keyword id="KW-0067">ATP-binding</keyword>
<keyword id="KW-0963">Cytoplasm</keyword>
<keyword id="KW-0436">Ligase</keyword>
<keyword id="KW-0547">Nucleotide-binding</keyword>
<keyword id="KW-0648">Protein biosynthesis</keyword>
<name>SYR_CYAP4</name>
<protein>
    <recommendedName>
        <fullName evidence="1">Arginine--tRNA ligase</fullName>
        <ecNumber evidence="1">6.1.1.19</ecNumber>
    </recommendedName>
    <alternativeName>
        <fullName evidence="1">Arginyl-tRNA synthetase</fullName>
        <shortName evidence="1">ArgRS</shortName>
    </alternativeName>
</protein>
<reference key="1">
    <citation type="journal article" date="2011" name="MBio">
        <title>Novel metabolic attributes of the genus Cyanothece, comprising a group of unicellular nitrogen-fixing Cyanobacteria.</title>
        <authorList>
            <person name="Bandyopadhyay A."/>
            <person name="Elvitigala T."/>
            <person name="Welsh E."/>
            <person name="Stockel J."/>
            <person name="Liberton M."/>
            <person name="Min H."/>
            <person name="Sherman L.A."/>
            <person name="Pakrasi H.B."/>
        </authorList>
    </citation>
    <scope>NUCLEOTIDE SEQUENCE [LARGE SCALE GENOMIC DNA]</scope>
    <source>
        <strain>PCC 7425 / ATCC 29141</strain>
    </source>
</reference>
<proteinExistence type="inferred from homology"/>
<dbReference type="EC" id="6.1.1.19" evidence="1"/>
<dbReference type="EMBL" id="CP001344">
    <property type="protein sequence ID" value="ACL45991.1"/>
    <property type="molecule type" value="Genomic_DNA"/>
</dbReference>
<dbReference type="SMR" id="B8HSK8"/>
<dbReference type="STRING" id="395961.Cyan7425_3671"/>
<dbReference type="KEGG" id="cyn:Cyan7425_3671"/>
<dbReference type="eggNOG" id="COG0018">
    <property type="taxonomic scope" value="Bacteria"/>
</dbReference>
<dbReference type="HOGENOM" id="CLU_006406_5_1_3"/>
<dbReference type="OrthoDB" id="9805987at2"/>
<dbReference type="GO" id="GO:0005737">
    <property type="term" value="C:cytoplasm"/>
    <property type="evidence" value="ECO:0007669"/>
    <property type="project" value="UniProtKB-SubCell"/>
</dbReference>
<dbReference type="GO" id="GO:0004814">
    <property type="term" value="F:arginine-tRNA ligase activity"/>
    <property type="evidence" value="ECO:0007669"/>
    <property type="project" value="UniProtKB-UniRule"/>
</dbReference>
<dbReference type="GO" id="GO:0005524">
    <property type="term" value="F:ATP binding"/>
    <property type="evidence" value="ECO:0007669"/>
    <property type="project" value="UniProtKB-UniRule"/>
</dbReference>
<dbReference type="GO" id="GO:0006420">
    <property type="term" value="P:arginyl-tRNA aminoacylation"/>
    <property type="evidence" value="ECO:0007669"/>
    <property type="project" value="UniProtKB-UniRule"/>
</dbReference>
<dbReference type="CDD" id="cd07956">
    <property type="entry name" value="Anticodon_Ia_Arg"/>
    <property type="match status" value="1"/>
</dbReference>
<dbReference type="CDD" id="cd00671">
    <property type="entry name" value="ArgRS_core"/>
    <property type="match status" value="1"/>
</dbReference>
<dbReference type="FunFam" id="3.40.50.620:FF:000030">
    <property type="entry name" value="Arginine--tRNA ligase"/>
    <property type="match status" value="1"/>
</dbReference>
<dbReference type="FunFam" id="1.10.730.10:FF:000006">
    <property type="entry name" value="Arginyl-tRNA synthetase 2, mitochondrial"/>
    <property type="match status" value="1"/>
</dbReference>
<dbReference type="Gene3D" id="3.30.1360.70">
    <property type="entry name" value="Arginyl tRNA synthetase N-terminal domain"/>
    <property type="match status" value="1"/>
</dbReference>
<dbReference type="Gene3D" id="3.40.50.620">
    <property type="entry name" value="HUPs"/>
    <property type="match status" value="1"/>
</dbReference>
<dbReference type="Gene3D" id="1.10.730.10">
    <property type="entry name" value="Isoleucyl-tRNA Synthetase, Domain 1"/>
    <property type="match status" value="1"/>
</dbReference>
<dbReference type="HAMAP" id="MF_00123">
    <property type="entry name" value="Arg_tRNA_synth"/>
    <property type="match status" value="1"/>
</dbReference>
<dbReference type="InterPro" id="IPR001412">
    <property type="entry name" value="aa-tRNA-synth_I_CS"/>
</dbReference>
<dbReference type="InterPro" id="IPR001278">
    <property type="entry name" value="Arg-tRNA-ligase"/>
</dbReference>
<dbReference type="InterPro" id="IPR005148">
    <property type="entry name" value="Arg-tRNA-synth_N"/>
</dbReference>
<dbReference type="InterPro" id="IPR036695">
    <property type="entry name" value="Arg-tRNA-synth_N_sf"/>
</dbReference>
<dbReference type="InterPro" id="IPR035684">
    <property type="entry name" value="ArgRS_core"/>
</dbReference>
<dbReference type="InterPro" id="IPR008909">
    <property type="entry name" value="DALR_anticod-bd"/>
</dbReference>
<dbReference type="InterPro" id="IPR014729">
    <property type="entry name" value="Rossmann-like_a/b/a_fold"/>
</dbReference>
<dbReference type="InterPro" id="IPR009080">
    <property type="entry name" value="tRNAsynth_Ia_anticodon-bd"/>
</dbReference>
<dbReference type="NCBIfam" id="TIGR00456">
    <property type="entry name" value="argS"/>
    <property type="match status" value="1"/>
</dbReference>
<dbReference type="PANTHER" id="PTHR11956:SF5">
    <property type="entry name" value="ARGININE--TRNA LIGASE, CYTOPLASMIC"/>
    <property type="match status" value="1"/>
</dbReference>
<dbReference type="PANTHER" id="PTHR11956">
    <property type="entry name" value="ARGINYL-TRNA SYNTHETASE"/>
    <property type="match status" value="1"/>
</dbReference>
<dbReference type="Pfam" id="PF03485">
    <property type="entry name" value="Arg_tRNA_synt_N"/>
    <property type="match status" value="1"/>
</dbReference>
<dbReference type="Pfam" id="PF05746">
    <property type="entry name" value="DALR_1"/>
    <property type="match status" value="1"/>
</dbReference>
<dbReference type="Pfam" id="PF00750">
    <property type="entry name" value="tRNA-synt_1d"/>
    <property type="match status" value="1"/>
</dbReference>
<dbReference type="PRINTS" id="PR01038">
    <property type="entry name" value="TRNASYNTHARG"/>
</dbReference>
<dbReference type="SMART" id="SM01016">
    <property type="entry name" value="Arg_tRNA_synt_N"/>
    <property type="match status" value="1"/>
</dbReference>
<dbReference type="SMART" id="SM00836">
    <property type="entry name" value="DALR_1"/>
    <property type="match status" value="1"/>
</dbReference>
<dbReference type="SUPFAM" id="SSF47323">
    <property type="entry name" value="Anticodon-binding domain of a subclass of class I aminoacyl-tRNA synthetases"/>
    <property type="match status" value="1"/>
</dbReference>
<dbReference type="SUPFAM" id="SSF55190">
    <property type="entry name" value="Arginyl-tRNA synthetase (ArgRS), N-terminal 'additional' domain"/>
    <property type="match status" value="1"/>
</dbReference>
<dbReference type="SUPFAM" id="SSF52374">
    <property type="entry name" value="Nucleotidylyl transferase"/>
    <property type="match status" value="1"/>
</dbReference>
<dbReference type="PROSITE" id="PS00178">
    <property type="entry name" value="AA_TRNA_LIGASE_I"/>
    <property type="match status" value="1"/>
</dbReference>
<organism>
    <name type="scientific">Cyanothece sp. (strain PCC 7425 / ATCC 29141)</name>
    <dbReference type="NCBI Taxonomy" id="395961"/>
    <lineage>
        <taxon>Bacteria</taxon>
        <taxon>Bacillati</taxon>
        <taxon>Cyanobacteriota</taxon>
        <taxon>Cyanophyceae</taxon>
        <taxon>Gomontiellales</taxon>
        <taxon>Cyanothecaceae</taxon>
        <taxon>Cyanothece</taxon>
    </lineage>
</organism>
<comment type="catalytic activity">
    <reaction evidence="1">
        <text>tRNA(Arg) + L-arginine + ATP = L-arginyl-tRNA(Arg) + AMP + diphosphate</text>
        <dbReference type="Rhea" id="RHEA:20301"/>
        <dbReference type="Rhea" id="RHEA-COMP:9658"/>
        <dbReference type="Rhea" id="RHEA-COMP:9673"/>
        <dbReference type="ChEBI" id="CHEBI:30616"/>
        <dbReference type="ChEBI" id="CHEBI:32682"/>
        <dbReference type="ChEBI" id="CHEBI:33019"/>
        <dbReference type="ChEBI" id="CHEBI:78442"/>
        <dbReference type="ChEBI" id="CHEBI:78513"/>
        <dbReference type="ChEBI" id="CHEBI:456215"/>
        <dbReference type="EC" id="6.1.1.19"/>
    </reaction>
</comment>
<comment type="subunit">
    <text evidence="1">Monomer.</text>
</comment>
<comment type="subcellular location">
    <subcellularLocation>
        <location evidence="1">Cytoplasm</location>
    </subcellularLocation>
</comment>
<comment type="similarity">
    <text evidence="1">Belongs to the class-I aminoacyl-tRNA synthetase family.</text>
</comment>